<protein>
    <recommendedName>
        <fullName evidence="1">HMP-PP phosphatase</fullName>
        <ecNumber evidence="1">3.6.1.-</ecNumber>
    </recommendedName>
</protein>
<evidence type="ECO:0000255" key="1">
    <source>
        <dbReference type="HAMAP-Rule" id="MF_01847"/>
    </source>
</evidence>
<proteinExistence type="inferred from homology"/>
<reference key="1">
    <citation type="journal article" date="2008" name="Genome Res.">
        <title>Comparative genome analysis of Salmonella enteritidis PT4 and Salmonella gallinarum 287/91 provides insights into evolutionary and host adaptation pathways.</title>
        <authorList>
            <person name="Thomson N.R."/>
            <person name="Clayton D.J."/>
            <person name="Windhorst D."/>
            <person name="Vernikos G."/>
            <person name="Davidson S."/>
            <person name="Churcher C."/>
            <person name="Quail M.A."/>
            <person name="Stevens M."/>
            <person name="Jones M.A."/>
            <person name="Watson M."/>
            <person name="Barron A."/>
            <person name="Layton A."/>
            <person name="Pickard D."/>
            <person name="Kingsley R.A."/>
            <person name="Bignell A."/>
            <person name="Clark L."/>
            <person name="Harris B."/>
            <person name="Ormond D."/>
            <person name="Abdellah Z."/>
            <person name="Brooks K."/>
            <person name="Cherevach I."/>
            <person name="Chillingworth T."/>
            <person name="Woodward J."/>
            <person name="Norberczak H."/>
            <person name="Lord A."/>
            <person name="Arrowsmith C."/>
            <person name="Jagels K."/>
            <person name="Moule S."/>
            <person name="Mungall K."/>
            <person name="Saunders M."/>
            <person name="Whitehead S."/>
            <person name="Chabalgoity J.A."/>
            <person name="Maskell D."/>
            <person name="Humphreys T."/>
            <person name="Roberts M."/>
            <person name="Barrow P.A."/>
            <person name="Dougan G."/>
            <person name="Parkhill J."/>
        </authorList>
    </citation>
    <scope>NUCLEOTIDE SEQUENCE [LARGE SCALE GENOMIC DNA]</scope>
    <source>
        <strain>P125109</strain>
    </source>
</reference>
<keyword id="KW-0378">Hydrolase</keyword>
<keyword id="KW-0460">Magnesium</keyword>
<keyword id="KW-0479">Metal-binding</keyword>
<organism>
    <name type="scientific">Salmonella enteritidis PT4 (strain P125109)</name>
    <dbReference type="NCBI Taxonomy" id="550537"/>
    <lineage>
        <taxon>Bacteria</taxon>
        <taxon>Pseudomonadati</taxon>
        <taxon>Pseudomonadota</taxon>
        <taxon>Gammaproteobacteria</taxon>
        <taxon>Enterobacterales</taxon>
        <taxon>Enterobacteriaceae</taxon>
        <taxon>Salmonella</taxon>
    </lineage>
</organism>
<feature type="chain" id="PRO_1000188508" description="HMP-PP phosphatase">
    <location>
        <begin position="1"/>
        <end position="272"/>
    </location>
</feature>
<feature type="active site" description="Nucleophile" evidence="1">
    <location>
        <position position="8"/>
    </location>
</feature>
<feature type="binding site" evidence="1">
    <location>
        <position position="8"/>
    </location>
    <ligand>
        <name>Mg(2+)</name>
        <dbReference type="ChEBI" id="CHEBI:18420"/>
    </ligand>
</feature>
<feature type="binding site" evidence="1">
    <location>
        <position position="10"/>
    </location>
    <ligand>
        <name>Mg(2+)</name>
        <dbReference type="ChEBI" id="CHEBI:18420"/>
    </ligand>
</feature>
<feature type="binding site" evidence="1">
    <location>
        <position position="212"/>
    </location>
    <ligand>
        <name>Mg(2+)</name>
        <dbReference type="ChEBI" id="CHEBI:18420"/>
    </ligand>
</feature>
<name>COF_SALEP</name>
<accession>B5QU47</accession>
<comment type="function">
    <text evidence="1">Catalyzes the hydrolysis of 4-amino-2-methyl-5-hydroxymethylpyrimidine pyrophosphate (HMP-PP) to 4-amino-2-methyl-5-hydroxymethylpyrimidine phosphate (HMP-P).</text>
</comment>
<comment type="catalytic activity">
    <reaction evidence="1">
        <text>4-amino-2-methyl-5-(diphosphooxymethyl)pyrimidine + H2O = 4-amino-2-methyl-5-(phosphooxymethyl)pyrimidine + phosphate + H(+)</text>
        <dbReference type="Rhea" id="RHEA:27914"/>
        <dbReference type="ChEBI" id="CHEBI:15377"/>
        <dbReference type="ChEBI" id="CHEBI:15378"/>
        <dbReference type="ChEBI" id="CHEBI:43474"/>
        <dbReference type="ChEBI" id="CHEBI:57841"/>
        <dbReference type="ChEBI" id="CHEBI:58354"/>
    </reaction>
</comment>
<comment type="cofactor">
    <cofactor evidence="1">
        <name>Mg(2+)</name>
        <dbReference type="ChEBI" id="CHEBI:18420"/>
    </cofactor>
</comment>
<comment type="similarity">
    <text evidence="1">Belongs to the HAD-like hydrolase superfamily. Cof family.</text>
</comment>
<sequence>MARLAAFDMDGTLLMPDHHLGRETIATLARLRERDITLTFATGRHVLEMRHILGTLSLDAYLITGNGTRIHSLEGDVLHRQDLDPQVADTVMHHAWDTRASMHVFNDNGWFTGQEIPALLQAHVYSGFRYQVIDIKSIPAHQVTKICFCGDHDDLIRLRIQLNEALEERAHLCFSAVDCLEVLPLGCNKGSALAVLSNHLGLSLADCMAFGDAMNDREMLGSVGRGLIMGNAMPQLIAALPHLSVIGHCGNQAVSHFLTHWLDNPHLPYSPE</sequence>
<dbReference type="EC" id="3.6.1.-" evidence="1"/>
<dbReference type="EMBL" id="AM933172">
    <property type="protein sequence ID" value="CAR32025.1"/>
    <property type="molecule type" value="Genomic_DNA"/>
</dbReference>
<dbReference type="RefSeq" id="WP_000113030.1">
    <property type="nucleotide sequence ID" value="NC_011294.1"/>
</dbReference>
<dbReference type="SMR" id="B5QU47"/>
<dbReference type="KEGG" id="set:SEN0439"/>
<dbReference type="HOGENOM" id="CLU_044146_5_2_6"/>
<dbReference type="Proteomes" id="UP000000613">
    <property type="component" value="Chromosome"/>
</dbReference>
<dbReference type="GO" id="GO:0002145">
    <property type="term" value="F:4-amino-5-hydroxymethyl-2-methylpyrimidine diphosphatase activity"/>
    <property type="evidence" value="ECO:0007669"/>
    <property type="project" value="RHEA"/>
</dbReference>
<dbReference type="GO" id="GO:0000287">
    <property type="term" value="F:magnesium ion binding"/>
    <property type="evidence" value="ECO:0000250"/>
    <property type="project" value="UniProtKB"/>
</dbReference>
<dbReference type="GO" id="GO:0016791">
    <property type="term" value="F:phosphatase activity"/>
    <property type="evidence" value="ECO:0000250"/>
    <property type="project" value="UniProtKB"/>
</dbReference>
<dbReference type="CDD" id="cd07516">
    <property type="entry name" value="HAD_Pase"/>
    <property type="match status" value="1"/>
</dbReference>
<dbReference type="FunFam" id="3.30.1240.10:FF:000002">
    <property type="entry name" value="HMP-PP phosphatase"/>
    <property type="match status" value="1"/>
</dbReference>
<dbReference type="Gene3D" id="3.30.1240.10">
    <property type="match status" value="1"/>
</dbReference>
<dbReference type="Gene3D" id="3.40.50.1000">
    <property type="entry name" value="HAD superfamily/HAD-like"/>
    <property type="match status" value="1"/>
</dbReference>
<dbReference type="HAMAP" id="MF_01847">
    <property type="entry name" value="HMP_PP_phosphat"/>
    <property type="match status" value="1"/>
</dbReference>
<dbReference type="InterPro" id="IPR000150">
    <property type="entry name" value="Cof"/>
</dbReference>
<dbReference type="InterPro" id="IPR036412">
    <property type="entry name" value="HAD-like_sf"/>
</dbReference>
<dbReference type="InterPro" id="IPR006379">
    <property type="entry name" value="HAD-SF_hydro_IIB"/>
</dbReference>
<dbReference type="InterPro" id="IPR023214">
    <property type="entry name" value="HAD_sf"/>
</dbReference>
<dbReference type="InterPro" id="IPR023938">
    <property type="entry name" value="HMP-PP_phosphatase"/>
</dbReference>
<dbReference type="NCBIfam" id="TIGR00099">
    <property type="entry name" value="Cof-subfamily"/>
    <property type="match status" value="1"/>
</dbReference>
<dbReference type="NCBIfam" id="TIGR01484">
    <property type="entry name" value="HAD-SF-IIB"/>
    <property type="match status" value="1"/>
</dbReference>
<dbReference type="NCBIfam" id="NF011705">
    <property type="entry name" value="PRK15126.1"/>
    <property type="match status" value="1"/>
</dbReference>
<dbReference type="PANTHER" id="PTHR47267">
    <property type="match status" value="1"/>
</dbReference>
<dbReference type="PANTHER" id="PTHR47267:SF2">
    <property type="entry name" value="HMP-PP PHOSPHATASE"/>
    <property type="match status" value="1"/>
</dbReference>
<dbReference type="Pfam" id="PF08282">
    <property type="entry name" value="Hydrolase_3"/>
    <property type="match status" value="1"/>
</dbReference>
<dbReference type="SFLD" id="SFLDG01140">
    <property type="entry name" value="C2.B:_Phosphomannomutase_and_P"/>
    <property type="match status" value="1"/>
</dbReference>
<dbReference type="SFLD" id="SFLDS00003">
    <property type="entry name" value="Haloacid_Dehalogenase"/>
    <property type="match status" value="1"/>
</dbReference>
<dbReference type="SUPFAM" id="SSF56784">
    <property type="entry name" value="HAD-like"/>
    <property type="match status" value="1"/>
</dbReference>
<dbReference type="PROSITE" id="PS01228">
    <property type="entry name" value="COF_1"/>
    <property type="match status" value="1"/>
</dbReference>
<dbReference type="PROSITE" id="PS01229">
    <property type="entry name" value="COF_2"/>
    <property type="match status" value="1"/>
</dbReference>
<gene>
    <name evidence="1" type="primary">cof</name>
    <name type="ordered locus">SEN0439</name>
</gene>